<sequence>MQAALTAFFMLLFSLLSLLGIAANGFIVLVLGREWLRYGRLLPLDMILISLGASRFCLQLVGTVHNFYYSAQKVEYSGGLGRQFFHLHWHFLNSATFWFCSWLSVLFCVKIANITHPTFLWLKWRFPAWVPWLLLGSVLISFIITLLFFWVNYPAYQEFLIRKFSVNMTYKWNTRIETYYFPSLKLVIWSIPFSVFLVSIMLLINSLRRHTQRMQHNGHSLQDPSTQAHTRALKSLISFLILYALSFLSLIIDATKFISMQNDFYWPWQIAVYLCISIHPFILIFSNLKLRSVFSQLLLLARGFWVA</sequence>
<evidence type="ECO:0000250" key="1"/>
<evidence type="ECO:0000255" key="2"/>
<evidence type="ECO:0000305" key="3"/>
<reference key="1">
    <citation type="journal article" date="2005" name="Mol. Biol. Evol.">
        <title>Evolution of bitter taste receptors in humans and apes.</title>
        <authorList>
            <person name="Fischer A."/>
            <person name="Gilad Y."/>
            <person name="Man O."/>
            <person name="Paeaebo S."/>
        </authorList>
    </citation>
    <scope>NUCLEOTIDE SEQUENCE [GENOMIC DNA]</scope>
</reference>
<reference key="2">
    <citation type="journal article" date="2004" name="Proc. Natl. Acad. Sci. U.S.A.">
        <title>Divergence of T2R chemosensory receptor families in humans, bonobos, and chimpanzees.</title>
        <authorList>
            <person name="Parry C.M."/>
            <person name="Erkner A."/>
            <person name="le Coutre J."/>
        </authorList>
    </citation>
    <scope>NUCLEOTIDE SEQUENCE [GENOMIC DNA]</scope>
</reference>
<dbReference type="EMBL" id="AY724869">
    <property type="protein sequence ID" value="AAU21092.1"/>
    <property type="molecule type" value="Genomic_DNA"/>
</dbReference>
<dbReference type="EMBL" id="AY677146">
    <property type="protein sequence ID" value="AAV28574.1"/>
    <property type="molecule type" value="Genomic_DNA"/>
</dbReference>
<dbReference type="SMR" id="Q646C7"/>
<dbReference type="STRING" id="9597.ENSPPAP00000001319"/>
<dbReference type="GlyCosmos" id="Q646C7">
    <property type="glycosylation" value="1 site, No reported glycans"/>
</dbReference>
<dbReference type="Ensembl" id="ENSPPAT00000006242.1">
    <property type="protein sequence ID" value="ENSPPAP00000001319.1"/>
    <property type="gene ID" value="ENSPPAG00000005758.1"/>
</dbReference>
<dbReference type="GeneID" id="100981444"/>
<dbReference type="KEGG" id="pps:100981444"/>
<dbReference type="eggNOG" id="ENOG502S2SI">
    <property type="taxonomic scope" value="Eukaryota"/>
</dbReference>
<dbReference type="GeneTree" id="ENSGT01100000263477"/>
<dbReference type="OMA" id="FCLQWVG"/>
<dbReference type="OrthoDB" id="10180at9604"/>
<dbReference type="Proteomes" id="UP000240080">
    <property type="component" value="Chromosome 7"/>
</dbReference>
<dbReference type="GO" id="GO:0005886">
    <property type="term" value="C:plasma membrane"/>
    <property type="evidence" value="ECO:0007669"/>
    <property type="project" value="UniProtKB-ARBA"/>
</dbReference>
<dbReference type="GO" id="GO:0033038">
    <property type="term" value="F:bitter taste receptor activity"/>
    <property type="evidence" value="ECO:0007669"/>
    <property type="project" value="InterPro"/>
</dbReference>
<dbReference type="GO" id="GO:0004930">
    <property type="term" value="F:G protein-coupled receptor activity"/>
    <property type="evidence" value="ECO:0007669"/>
    <property type="project" value="UniProtKB-KW"/>
</dbReference>
<dbReference type="CDD" id="cd15018">
    <property type="entry name" value="7tm_TAS2R41-like"/>
    <property type="match status" value="1"/>
</dbReference>
<dbReference type="FunFam" id="1.20.1070.10:FF:000055">
    <property type="entry name" value="Taste receptor type 2"/>
    <property type="match status" value="1"/>
</dbReference>
<dbReference type="Gene3D" id="1.20.1070.10">
    <property type="entry name" value="Rhodopsin 7-helix transmembrane proteins"/>
    <property type="match status" value="1"/>
</dbReference>
<dbReference type="InterPro" id="IPR007960">
    <property type="entry name" value="TAS2R"/>
</dbReference>
<dbReference type="PANTHER" id="PTHR11394">
    <property type="entry name" value="TASTE RECEPTOR TYPE 2"/>
    <property type="match status" value="1"/>
</dbReference>
<dbReference type="PANTHER" id="PTHR11394:SF73">
    <property type="entry name" value="TASTE RECEPTOR TYPE 2 MEMBER 41"/>
    <property type="match status" value="1"/>
</dbReference>
<dbReference type="Pfam" id="PF05296">
    <property type="entry name" value="TAS2R"/>
    <property type="match status" value="1"/>
</dbReference>
<dbReference type="SUPFAM" id="SSF81321">
    <property type="entry name" value="Family A G protein-coupled receptor-like"/>
    <property type="match status" value="1"/>
</dbReference>
<organism>
    <name type="scientific">Pan paniscus</name>
    <name type="common">Pygmy chimpanzee</name>
    <name type="synonym">Bonobo</name>
    <dbReference type="NCBI Taxonomy" id="9597"/>
    <lineage>
        <taxon>Eukaryota</taxon>
        <taxon>Metazoa</taxon>
        <taxon>Chordata</taxon>
        <taxon>Craniata</taxon>
        <taxon>Vertebrata</taxon>
        <taxon>Euteleostomi</taxon>
        <taxon>Mammalia</taxon>
        <taxon>Eutheria</taxon>
        <taxon>Euarchontoglires</taxon>
        <taxon>Primates</taxon>
        <taxon>Haplorrhini</taxon>
        <taxon>Catarrhini</taxon>
        <taxon>Hominidae</taxon>
        <taxon>Pan</taxon>
    </lineage>
</organism>
<proteinExistence type="inferred from homology"/>
<name>T2R41_PANPA</name>
<accession>Q646C7</accession>
<protein>
    <recommendedName>
        <fullName>Taste receptor type 2 member 41</fullName>
        <shortName>T2R41</shortName>
    </recommendedName>
</protein>
<feature type="chain" id="PRO_0000082296" description="Taste receptor type 2 member 41">
    <location>
        <begin position="1"/>
        <end position="307"/>
    </location>
</feature>
<feature type="topological domain" description="Extracellular" evidence="2">
    <location>
        <begin position="1"/>
        <end position="7"/>
    </location>
</feature>
<feature type="transmembrane region" description="Helical; Name=1" evidence="2">
    <location>
        <begin position="8"/>
        <end position="28"/>
    </location>
</feature>
<feature type="topological domain" description="Cytoplasmic" evidence="2">
    <location>
        <begin position="29"/>
        <end position="40"/>
    </location>
</feature>
<feature type="transmembrane region" description="Helical; Name=2" evidence="2">
    <location>
        <begin position="41"/>
        <end position="61"/>
    </location>
</feature>
<feature type="topological domain" description="Extracellular" evidence="2">
    <location>
        <begin position="62"/>
        <end position="88"/>
    </location>
</feature>
<feature type="transmembrane region" description="Helical; Name=3" evidence="2">
    <location>
        <begin position="89"/>
        <end position="109"/>
    </location>
</feature>
<feature type="topological domain" description="Cytoplasmic" evidence="2">
    <location>
        <begin position="110"/>
        <end position="129"/>
    </location>
</feature>
<feature type="transmembrane region" description="Helical; Name=4" evidence="2">
    <location>
        <begin position="130"/>
        <end position="150"/>
    </location>
</feature>
<feature type="topological domain" description="Extracellular" evidence="2">
    <location>
        <begin position="151"/>
        <end position="183"/>
    </location>
</feature>
<feature type="transmembrane region" description="Helical; Name=5" evidence="2">
    <location>
        <begin position="184"/>
        <end position="204"/>
    </location>
</feature>
<feature type="topological domain" description="Cytoplasmic" evidence="2">
    <location>
        <begin position="205"/>
        <end position="234"/>
    </location>
</feature>
<feature type="transmembrane region" description="Helical; Name=6" evidence="2">
    <location>
        <begin position="235"/>
        <end position="255"/>
    </location>
</feature>
<feature type="topological domain" description="Extracellular" evidence="2">
    <location>
        <begin position="256"/>
        <end position="264"/>
    </location>
</feature>
<feature type="transmembrane region" description="Helical; Name=7" evidence="2">
    <location>
        <begin position="265"/>
        <end position="285"/>
    </location>
</feature>
<feature type="topological domain" description="Cytoplasmic" evidence="2">
    <location>
        <begin position="286"/>
        <end position="307"/>
    </location>
</feature>
<feature type="glycosylation site" description="N-linked (GlcNAc...) asparagine" evidence="2">
    <location>
        <position position="167"/>
    </location>
</feature>
<keyword id="KW-0297">G-protein coupled receptor</keyword>
<keyword id="KW-0325">Glycoprotein</keyword>
<keyword id="KW-0472">Membrane</keyword>
<keyword id="KW-0675">Receptor</keyword>
<keyword id="KW-1185">Reference proteome</keyword>
<keyword id="KW-0716">Sensory transduction</keyword>
<keyword id="KW-0919">Taste</keyword>
<keyword id="KW-0807">Transducer</keyword>
<keyword id="KW-0812">Transmembrane</keyword>
<keyword id="KW-1133">Transmembrane helix</keyword>
<comment type="function">
    <text evidence="1">Receptor that may play a role in the perception of bitterness and is gustducin-linked. May play a role in sensing the chemical composition of the gastrointestinal content. The activity of this receptor may stimulate alpha gustducin, mediate PLC-beta-2 activation and lead to the gating of TRPM5 (By similarity).</text>
</comment>
<comment type="subcellular location">
    <subcellularLocation>
        <location>Membrane</location>
        <topology>Multi-pass membrane protein</topology>
    </subcellularLocation>
</comment>
<comment type="miscellaneous">
    <text>Most taste cells may be activated by a limited number of bitter compounds; individual taste cells can discriminate among bitter stimuli.</text>
</comment>
<comment type="similarity">
    <text evidence="3">Belongs to the G-protein coupled receptor T2R family.</text>
</comment>
<gene>
    <name type="primary">TAS2R41</name>
</gene>